<name>NOX4_HUMAN</name>
<sequence>MAVSWRSWLANEGVKHLCLFIWLSMNVLLFWKTFLLYNQGPEYHYLHQMLGLGLCLSRASASVLNLNCSLILLPMCRTLLAYLRGSQKVPSRRTRRLLDKSRTFHITCGVTICIFSGVHVAAHLVNALNFSVNYSEDFVELNAARYRDEDPRKLLFTTVPGLTGVCMVVVLFLMITASTYAIRVSNYDIFWYTHNLFFVFYMLLTLHVSGGLLKYQTNLDTHPPGCISLNRTSSQNISLPEYFSEHFHEPFPEGFSKPAEFTQHKFVKICMEEPRFQANFPQTWLWISGPLCLYCAERLYRYIRSNKPVTIISVMSHPSDVMEIRMVKENFKARPGQYITLHCPSVSALENHPFTLTMCPTETKATFGVHLKIVGDWTERFRDLLLPPSSQDSEILPFIQSRNYPKLYIDGPFGSPFEESLNYEVSLCVAGGIGVTPFASILNTLLDDWKPYKLRRLYFIWVCRDIQSFRWFADLLCMLHNKFWQENRPDYVNIQLYLSQTDGIQKIIGEKYHALNSRLFIGRPRWKLLFDEIAKYNRGKTVGVFCCGPNSLSKTLHKLSNQNNSYGTRFEYNKESFS</sequence>
<reference key="1">
    <citation type="journal article" date="2000" name="Proc. Natl. Acad. Sci. U.S.A.">
        <title>Identification of renox, an NAD(P)H oxidase in kidney.</title>
        <authorList>
            <person name="Geiszt M."/>
            <person name="Kopp J.B."/>
            <person name="Varnai P."/>
            <person name="Leto T.L."/>
        </authorList>
    </citation>
    <scope>NUCLEOTIDE SEQUENCE [MRNA] (ISOFORM 1)</scope>
    <scope>DEVELOPMENTAL STAGE</scope>
    <scope>VARIANT ILE-315</scope>
    <scope>FUNCTION</scope>
    <scope>CATALYTIC ACTIVITY</scope>
    <source>
        <tissue>Kidney</tissue>
    </source>
</reference>
<reference key="2">
    <citation type="journal article" date="2001" name="Gene">
        <title>Homologs of gp91phox: cloning and tissue expression of Nox3, Nox4, and Nox5.</title>
        <authorList>
            <person name="Cheng G."/>
            <person name="Cao Z."/>
            <person name="Xu X."/>
            <person name="van Meir E.G."/>
            <person name="Lambeth J.D."/>
        </authorList>
    </citation>
    <scope>NUCLEOTIDE SEQUENCE [MRNA] (ISOFORM 1)</scope>
    <scope>TISSUE SPECIFICITY</scope>
    <scope>DEVELOPMENTAL STAGE</scope>
    <scope>VARIANT ILE-315</scope>
    <source>
        <tissue>Fetal kidney</tissue>
    </source>
</reference>
<reference key="3">
    <citation type="journal article" date="2001" name="J. Biol. Chem.">
        <title>A novel superoxide-producing NAD(P)H oxidase in kidney.</title>
        <authorList>
            <person name="Shiose A."/>
            <person name="Kuroda J."/>
            <person name="Tsuruya K."/>
            <person name="Hirai M."/>
            <person name="Hirakata H."/>
            <person name="Naito S."/>
            <person name="Hattori M."/>
            <person name="Sakaki Y."/>
            <person name="Sumimoto H."/>
        </authorList>
    </citation>
    <scope>NUCLEOTIDE SEQUENCE [MRNA] (ISOFORM 1)</scope>
    <scope>FUNCTION</scope>
    <scope>TISSUE SPECIFICITY</scope>
    <scope>DEVELOPMENTAL STAGE</scope>
    <scope>VARIANT ILE-315</scope>
    <scope>CATALYTIC ACTIVITY</scope>
    <source>
        <tissue>Kidney</tissue>
    </source>
</reference>
<reference key="4">
    <citation type="journal article" date="2004" name="J. Biol. Chem.">
        <title>NADPH oxidase-dependent acid production in airway epithelial cells.</title>
        <authorList>
            <person name="Schwarzer C."/>
            <person name="Machen T.E."/>
            <person name="Illek B."/>
            <person name="Fischer H."/>
        </authorList>
    </citation>
    <scope>NUCLEOTIDE SEQUENCE [MRNA] (ISOFORM 6)</scope>
    <scope>TISSUE SPECIFICITY</scope>
    <scope>VARIANT ILE-315</scope>
</reference>
<reference key="5">
    <citation type="journal article" date="2005" name="Biochem. Biophys. Res. Commun.">
        <title>Identification of novel Nox4 splice variants with impact on ROS levels in A549 cells.</title>
        <authorList>
            <person name="Goyal P."/>
            <person name="Weissmann N."/>
            <person name="Rose F."/>
            <person name="Grimminger F."/>
            <person name="Schaefers H.J."/>
            <person name="Seeger W."/>
            <person name="Haenze J."/>
        </authorList>
    </citation>
    <scope>NUCLEOTIDE SEQUENCE [MRNA] (ISOFORMS 3; 4; 5 AND 6)</scope>
    <scope>FUNCTION (ISOFORMS 3 AND 4)</scope>
    <scope>SUBCELLULAR LOCATION</scope>
    <scope>GLYCOSYLATION</scope>
    <scope>VARIANT ILE-315</scope>
    <scope>CATALYTIC ACTIVITY (ISOFORM 4)</scope>
    <source>
        <tissue>Lung</tissue>
    </source>
</reference>
<reference key="6">
    <citation type="journal article" date="2004" name="Nat. Genet.">
        <title>Complete sequencing and characterization of 21,243 full-length human cDNAs.</title>
        <authorList>
            <person name="Ota T."/>
            <person name="Suzuki Y."/>
            <person name="Nishikawa T."/>
            <person name="Otsuki T."/>
            <person name="Sugiyama T."/>
            <person name="Irie R."/>
            <person name="Wakamatsu A."/>
            <person name="Hayashi K."/>
            <person name="Sato H."/>
            <person name="Nagai K."/>
            <person name="Kimura K."/>
            <person name="Makita H."/>
            <person name="Sekine M."/>
            <person name="Obayashi M."/>
            <person name="Nishi T."/>
            <person name="Shibahara T."/>
            <person name="Tanaka T."/>
            <person name="Ishii S."/>
            <person name="Yamamoto J."/>
            <person name="Saito K."/>
            <person name="Kawai Y."/>
            <person name="Isono Y."/>
            <person name="Nakamura Y."/>
            <person name="Nagahari K."/>
            <person name="Murakami K."/>
            <person name="Yasuda T."/>
            <person name="Iwayanagi T."/>
            <person name="Wagatsuma M."/>
            <person name="Shiratori A."/>
            <person name="Sudo H."/>
            <person name="Hosoiri T."/>
            <person name="Kaku Y."/>
            <person name="Kodaira H."/>
            <person name="Kondo H."/>
            <person name="Sugawara M."/>
            <person name="Takahashi M."/>
            <person name="Kanda K."/>
            <person name="Yokoi T."/>
            <person name="Furuya T."/>
            <person name="Kikkawa E."/>
            <person name="Omura Y."/>
            <person name="Abe K."/>
            <person name="Kamihara K."/>
            <person name="Katsuta N."/>
            <person name="Sato K."/>
            <person name="Tanikawa M."/>
            <person name="Yamazaki M."/>
            <person name="Ninomiya K."/>
            <person name="Ishibashi T."/>
            <person name="Yamashita H."/>
            <person name="Murakawa K."/>
            <person name="Fujimori K."/>
            <person name="Tanai H."/>
            <person name="Kimata M."/>
            <person name="Watanabe M."/>
            <person name="Hiraoka S."/>
            <person name="Chiba Y."/>
            <person name="Ishida S."/>
            <person name="Ono Y."/>
            <person name="Takiguchi S."/>
            <person name="Watanabe S."/>
            <person name="Yosida M."/>
            <person name="Hotuta T."/>
            <person name="Kusano J."/>
            <person name="Kanehori K."/>
            <person name="Takahashi-Fujii A."/>
            <person name="Hara H."/>
            <person name="Tanase T.-O."/>
            <person name="Nomura Y."/>
            <person name="Togiya S."/>
            <person name="Komai F."/>
            <person name="Hara R."/>
            <person name="Takeuchi K."/>
            <person name="Arita M."/>
            <person name="Imose N."/>
            <person name="Musashino K."/>
            <person name="Yuuki H."/>
            <person name="Oshima A."/>
            <person name="Sasaki N."/>
            <person name="Aotsuka S."/>
            <person name="Yoshikawa Y."/>
            <person name="Matsunawa H."/>
            <person name="Ichihara T."/>
            <person name="Shiohata N."/>
            <person name="Sano S."/>
            <person name="Moriya S."/>
            <person name="Momiyama H."/>
            <person name="Satoh N."/>
            <person name="Takami S."/>
            <person name="Terashima Y."/>
            <person name="Suzuki O."/>
            <person name="Nakagawa S."/>
            <person name="Senoh A."/>
            <person name="Mizoguchi H."/>
            <person name="Goto Y."/>
            <person name="Shimizu F."/>
            <person name="Wakebe H."/>
            <person name="Hishigaki H."/>
            <person name="Watanabe T."/>
            <person name="Sugiyama A."/>
            <person name="Takemoto M."/>
            <person name="Kawakami B."/>
            <person name="Yamazaki M."/>
            <person name="Watanabe K."/>
            <person name="Kumagai A."/>
            <person name="Itakura S."/>
            <person name="Fukuzumi Y."/>
            <person name="Fujimori Y."/>
            <person name="Komiyama M."/>
            <person name="Tashiro H."/>
            <person name="Tanigami A."/>
            <person name="Fujiwara T."/>
            <person name="Ono T."/>
            <person name="Yamada K."/>
            <person name="Fujii Y."/>
            <person name="Ozaki K."/>
            <person name="Hirao M."/>
            <person name="Ohmori Y."/>
            <person name="Kawabata A."/>
            <person name="Hikiji T."/>
            <person name="Kobatake N."/>
            <person name="Inagaki H."/>
            <person name="Ikema Y."/>
            <person name="Okamoto S."/>
            <person name="Okitani R."/>
            <person name="Kawakami T."/>
            <person name="Noguchi S."/>
            <person name="Itoh T."/>
            <person name="Shigeta K."/>
            <person name="Senba T."/>
            <person name="Matsumura K."/>
            <person name="Nakajima Y."/>
            <person name="Mizuno T."/>
            <person name="Morinaga M."/>
            <person name="Sasaki M."/>
            <person name="Togashi T."/>
            <person name="Oyama M."/>
            <person name="Hata H."/>
            <person name="Watanabe M."/>
            <person name="Komatsu T."/>
            <person name="Mizushima-Sugano J."/>
            <person name="Satoh T."/>
            <person name="Shirai Y."/>
            <person name="Takahashi Y."/>
            <person name="Nakagawa K."/>
            <person name="Okumura K."/>
            <person name="Nagase T."/>
            <person name="Nomura N."/>
            <person name="Kikuchi H."/>
            <person name="Masuho Y."/>
            <person name="Yamashita R."/>
            <person name="Nakai K."/>
            <person name="Yada T."/>
            <person name="Nakamura Y."/>
            <person name="Ohara O."/>
            <person name="Isogai T."/>
            <person name="Sugano S."/>
        </authorList>
    </citation>
    <scope>NUCLEOTIDE SEQUENCE [LARGE SCALE MRNA] (ISOFORMS 6 AND 9)</scope>
    <scope>VARIANT ILE-315</scope>
    <source>
        <tissue>Pulmonary artery</tissue>
    </source>
</reference>
<reference key="7">
    <citation type="journal article" date="2006" name="Nature">
        <title>Human chromosome 11 DNA sequence and analysis including novel gene identification.</title>
        <authorList>
            <person name="Taylor T.D."/>
            <person name="Noguchi H."/>
            <person name="Totoki Y."/>
            <person name="Toyoda A."/>
            <person name="Kuroki Y."/>
            <person name="Dewar K."/>
            <person name="Lloyd C."/>
            <person name="Itoh T."/>
            <person name="Takeda T."/>
            <person name="Kim D.-W."/>
            <person name="She X."/>
            <person name="Barlow K.F."/>
            <person name="Bloom T."/>
            <person name="Bruford E."/>
            <person name="Chang J.L."/>
            <person name="Cuomo C.A."/>
            <person name="Eichler E."/>
            <person name="FitzGerald M.G."/>
            <person name="Jaffe D.B."/>
            <person name="LaButti K."/>
            <person name="Nicol R."/>
            <person name="Park H.-S."/>
            <person name="Seaman C."/>
            <person name="Sougnez C."/>
            <person name="Yang X."/>
            <person name="Zimmer A.R."/>
            <person name="Zody M.C."/>
            <person name="Birren B.W."/>
            <person name="Nusbaum C."/>
            <person name="Fujiyama A."/>
            <person name="Hattori M."/>
            <person name="Rogers J."/>
            <person name="Lander E.S."/>
            <person name="Sakaki Y."/>
        </authorList>
    </citation>
    <scope>NUCLEOTIDE SEQUENCE [LARGE SCALE GENOMIC DNA]</scope>
</reference>
<reference key="8">
    <citation type="journal article" date="2004" name="Genome Res.">
        <title>The status, quality, and expansion of the NIH full-length cDNA project: the Mammalian Gene Collection (MGC).</title>
        <authorList>
            <consortium name="The MGC Project Team"/>
        </authorList>
    </citation>
    <scope>NUCLEOTIDE SEQUENCE [LARGE SCALE MRNA] (ISOFORMS 1 AND 7)</scope>
    <scope>VARIANT ILE-315</scope>
    <source>
        <tissue>Ovary</tissue>
    </source>
</reference>
<reference key="9">
    <citation type="journal article" date="2004" name="J. Biol. Chem.">
        <title>Reactive oxygen species produced by NAD(P)H oxidase inhibit apoptosis in pancreatic cancer cells.</title>
        <authorList>
            <person name="Vaquero E.C."/>
            <person name="Edderkaoui M."/>
            <person name="Pandol S.J."/>
            <person name="Gukovsky I."/>
            <person name="Gukovskaya A.S."/>
        </authorList>
    </citation>
    <scope>FUNCTION</scope>
    <scope>CATALYTIC ACTIVITY</scope>
</reference>
<reference key="10">
    <citation type="journal article" date="2004" name="J. Immunol.">
        <title>Direct interaction of TLR4 with NAD(P)H oxidase 4 isozyme is essential for lipopolysaccharide-induced production of reactive oxygen species and activation of NF-kappa B.</title>
        <authorList>
            <person name="Park H.S."/>
            <person name="Jung H.Y."/>
            <person name="Park E.Y."/>
            <person name="Kim J."/>
            <person name="Lee W.J."/>
            <person name="Bae Y.S."/>
        </authorList>
    </citation>
    <scope>FUNCTION</scope>
    <scope>INTERACTION WITH TLR4</scope>
    <scope>CATALYTIC ACTIVITY</scope>
</reference>
<reference key="11">
    <citation type="journal article" date="2004" name="Mol. Cell. Biol.">
        <title>The NAD(P)H oxidase homolog Nox4 modulates insulin-stimulated generation of H2O2 and plays an integral role in insulin signal transduction.</title>
        <authorList>
            <person name="Mahadev K."/>
            <person name="Motoshima H."/>
            <person name="Wu X."/>
            <person name="Ruddy J.M."/>
            <person name="Arnold R.S."/>
            <person name="Cheng G."/>
            <person name="Lambeth J.D."/>
            <person name="Goldstein B.J."/>
        </authorList>
    </citation>
    <scope>FUNCTION</scope>
    <scope>ACTIVITY REGULATION</scope>
    <scope>CATALYTIC ACTIVITY</scope>
</reference>
<reference key="12">
    <citation type="journal article" date="2004" name="Mol. Cell. Biol.">
        <title>NAD(P)H oxidase Nox-4 mediates 7-ketocholesterol-induced endoplasmic reticulum stress and apoptosis in human aortic smooth muscle cells.</title>
        <authorList>
            <person name="Pedruzzi E."/>
            <person name="Guichard C."/>
            <person name="Ollivier V."/>
            <person name="Driss F."/>
            <person name="Fay M."/>
            <person name="Prunet C."/>
            <person name="Marie J.-C."/>
            <person name="Pouzet C."/>
            <person name="Samadi M."/>
            <person name="Elbim C."/>
            <person name="O'dowd Y."/>
            <person name="Bens M."/>
            <person name="Vandewalle A."/>
            <person name="Gougerot-Pocidalo M.-A."/>
            <person name="Lizard G."/>
            <person name="Ogier-Denis E."/>
        </authorList>
    </citation>
    <scope>FUNCTION</scope>
    <scope>INDUCTION</scope>
    <scope>SUBCELLULAR LOCATION</scope>
    <scope>ACTIVITY REGULATION</scope>
    <scope>CATALYTIC ACTIVITY</scope>
</reference>
<reference key="13">
    <citation type="journal article" date="2005" name="Cancer Res.">
        <title>Nox4 is critical for hypoxia-inducible factor 2-alpha transcriptional activity in von Hippel-Lindau-deficient renal cell carcinoma.</title>
        <authorList>
            <person name="Maranchie J.K."/>
            <person name="Zhan Y."/>
        </authorList>
    </citation>
    <scope>FUNCTION</scope>
    <scope>CATALYTIC ACTIVITY</scope>
</reference>
<reference key="14">
    <citation type="journal article" date="2005" name="Circ. Res.">
        <title>NAD(P)H oxidase 4 mediates transforming growth factor-beta1-induced differentiation of cardiac fibroblasts into myofibroblasts.</title>
        <authorList>
            <person name="Cucoranu I."/>
            <person name="Clempus R."/>
            <person name="Dikalova A."/>
            <person name="Phelan P.J."/>
            <person name="Ariyan S."/>
            <person name="Dikalov S."/>
            <person name="Sorescu D."/>
        </authorList>
    </citation>
    <scope>FUNCTION</scope>
    <scope>CATALYTIC ACTIVITY</scope>
</reference>
<reference key="15">
    <citation type="journal article" date="2005" name="Genes Cells">
        <title>The superoxide-producing NAD(P)H oxidase Nox4 in the nucleus of human vascular endothelial cells.</title>
        <authorList>
            <person name="Kuroda J."/>
            <person name="Nakagawa K."/>
            <person name="Yamasaki T."/>
            <person name="Nakamura K."/>
            <person name="Takeya R."/>
            <person name="Kuribayashi F."/>
            <person name="Imajoh-Ohmi S."/>
            <person name="Igarashi K."/>
            <person name="Shibata Y."/>
            <person name="Sueishi K."/>
            <person name="Sumimoto H."/>
        </authorList>
    </citation>
    <scope>FUNCTION</scope>
    <scope>SUBCELLULAR LOCATION</scope>
    <scope>TISSUE SPECIFICITY</scope>
    <scope>ACTIVITY REGULATION</scope>
    <scope>CATALYTIC ACTIVITY</scope>
</reference>
<reference key="16">
    <citation type="journal article" date="2006" name="Cell. Signal.">
        <title>Functional analysis of Nox4 reveals unique characteristics compared to other NADPH oxidases.</title>
        <authorList>
            <person name="Martyn K.D."/>
            <person name="Frederick L.M."/>
            <person name="von Loehneysen K."/>
            <person name="Dinauer M.C."/>
            <person name="Knaus U.G."/>
        </authorList>
    </citation>
    <scope>FUNCTION</scope>
    <scope>INTERACTION WITH CYBA</scope>
    <scope>SUBCELLULAR LOCATION</scope>
    <scope>MUTAGENESIS OF ARG-304 AND 575-GLU--SER-578</scope>
    <scope>CATALYTIC ACTIVITY</scope>
</reference>
<reference key="17">
    <citation type="journal article" date="2006" name="Cell. Signal.">
        <title>NOX4 as an oxygen sensor to regulate TASK-1 activity.</title>
        <authorList>
            <person name="Lee Y.-M."/>
            <person name="Kim B.-J."/>
            <person name="Chun Y.-S."/>
            <person name="So I."/>
            <person name="Choi H."/>
            <person name="Kim M.-S."/>
            <person name="Park J.-W."/>
        </authorList>
    </citation>
    <scope>FUNCTION</scope>
    <scope>SUBCELLULAR LOCATION</scope>
    <scope>ACTIVITY REGULATION</scope>
    <scope>CATALYTIC ACTIVITY</scope>
</reference>
<reference key="18">
    <citation type="journal article" date="2011" name="J. Biol. Chem.">
        <title>The E-loop is involved in hydrogen peroxide formation by the NADPH oxidase Nox4.</title>
        <authorList>
            <person name="Takac I."/>
            <person name="Schroeder K."/>
            <person name="Zhang L."/>
            <person name="Lardy B."/>
            <person name="Anilkumar N."/>
            <person name="Lambeth J.D."/>
            <person name="Shah A.M."/>
            <person name="Morel F."/>
            <person name="Brandes R.P."/>
        </authorList>
    </citation>
    <scope>FUNCTION</scope>
    <scope>CATALYTIC ACTIVITY</scope>
    <scope>SUBCELLULAR LOCATION</scope>
    <scope>MUTAGENESIS OF HIS-16; HIS-47; 218-ASN--GLN-235; HIS-222; CYS-226; HIS-246; HIS-248; 264-HIS--GLU-273 AND CYS-270</scope>
    <scope>REGION</scope>
</reference>
<reference key="19">
    <citation type="journal article" date="2013" name="Arterioscler. Thromb. Vasc. Biol.">
        <title>A 28-kDa splice variant of NADPH oxidase-4 is nuclear-localized and involved in redox signaling in vascular cells.</title>
        <authorList>
            <person name="Anilkumar N."/>
            <person name="San Jose G."/>
            <person name="Sawyer I."/>
            <person name="Santos C.X."/>
            <person name="Sand C."/>
            <person name="Brewer A.C."/>
            <person name="Warren D."/>
            <person name="Shah A.M."/>
        </authorList>
    </citation>
    <scope>FUNCTION (ISOFORM 4)</scope>
    <scope>SUBCELLULAR LOCATION (ISOFORM 4)</scope>
    <scope>CATALYTIC ACTIVITY (ISOFORM 4)</scope>
</reference>
<reference key="20">
    <citation type="journal article" date="2014" name="Biochemistry">
        <title>Nox4: a hydrogen peroxide-generating oxygen sensor.</title>
        <authorList>
            <person name="Nisimoto Y."/>
            <person name="Diebold B.A."/>
            <person name="Cosentino-Gomes D."/>
            <person name="Lambeth J.D."/>
        </authorList>
    </citation>
    <scope>FUNCTION</scope>
    <scope>CATALYTIC ACTIVITY</scope>
    <scope>MUTAGENESIS OF HIS-222</scope>
    <scope>COFACTOR</scope>
</reference>
<reference key="21">
    <citation type="journal article" date="2016" name="EMBO J.">
        <title>Targeted redox inhibition of protein phosphatase 1 by Nox4 regulates eIF2alpha-mediated stress signaling.</title>
        <authorList>
            <person name="Santos C.X."/>
            <person name="Hafstad A.D."/>
            <person name="Beretta M."/>
            <person name="Zhang M."/>
            <person name="Molenaar C."/>
            <person name="Kopec J."/>
            <person name="Fotinou D."/>
            <person name="Murray T.V."/>
            <person name="Cobb A.M."/>
            <person name="Martin D."/>
            <person name="Zeh Silva M."/>
            <person name="Anilkumar N."/>
            <person name="Schroeder K."/>
            <person name="Shanahan C.M."/>
            <person name="Brewer A.C."/>
            <person name="Brandes R.P."/>
            <person name="Blanc E."/>
            <person name="Parsons M."/>
            <person name="Belousov V."/>
            <person name="Cammack R."/>
            <person name="Hider R.C."/>
            <person name="Steiner R.A."/>
            <person name="Shah A.M."/>
        </authorList>
    </citation>
    <scope>INTERACTION WITH PPP1R15A</scope>
    <scope>SUBCELLULAR LOCATION</scope>
</reference>
<reference key="22">
    <citation type="journal article" date="2024" name="J. Alzheimers Dis.">
        <title>Deubiquitinating Enzyme USP19 Regulates Ferroptosis and Mitochondrial Damage in SH-SY5Y Cells by Targeting the NOX4 Protein.</title>
        <authorList>
            <person name="Yu W."/>
            <person name="Zhuang S."/>
            <person name="Zhan M."/>
            <person name="Chen Y."/>
            <person name="Zhang J."/>
            <person name="Chen L."/>
            <person name="Tu C."/>
            <person name="Zheng L."/>
            <person name="Chen S."/>
        </authorList>
    </citation>
    <scope>DEUBIQUITINATED BY USP19</scope>
</reference>
<reference key="23">
    <citation type="journal article" date="2025" name="Inflammation">
        <title>NOX4 Regulates NLRP3 by Inhibiting the Ubiquitination of LRRC8A to Promote Ferroptosis in Nucleus Pulposus Cells.</title>
        <authorList>
            <person name="Zhang F."/>
            <person name="Cui D."/>
            <person name="Wang Z."/>
            <person name="Li Y."/>
            <person name="Wang K."/>
            <person name="Lu H."/>
            <person name="Yu H."/>
            <person name="Jiao W."/>
            <person name="Cui X."/>
        </authorList>
    </citation>
    <scope>FUNCTION</scope>
    <scope>SUBCELLULAR LOCATION</scope>
    <scope>INTERACTION WITH LRRC8A</scope>
</reference>
<proteinExistence type="evidence at protein level"/>
<gene>
    <name type="primary">NOX4</name>
    <name type="synonym">RENOX</name>
</gene>
<keyword id="KW-0025">Alternative splicing</keyword>
<keyword id="KW-0965">Cell junction</keyword>
<keyword id="KW-1003">Cell membrane</keyword>
<keyword id="KW-0963">Cytoplasm</keyword>
<keyword id="KW-1015">Disulfide bond</keyword>
<keyword id="KW-0256">Endoplasmic reticulum</keyword>
<keyword id="KW-0325">Glycoprotein</keyword>
<keyword id="KW-0472">Membrane</keyword>
<keyword id="KW-0521">NADP</keyword>
<keyword id="KW-0539">Nucleus</keyword>
<keyword id="KW-0560">Oxidoreductase</keyword>
<keyword id="KW-1267">Proteomics identification</keyword>
<keyword id="KW-1185">Reference proteome</keyword>
<keyword id="KW-0812">Transmembrane</keyword>
<keyword id="KW-1133">Transmembrane helix</keyword>
<evidence type="ECO:0000250" key="1">
    <source>
        <dbReference type="UniProtKB" id="Q924V1"/>
    </source>
</evidence>
<evidence type="ECO:0000250" key="2">
    <source>
        <dbReference type="UniProtKB" id="Q9JHI8"/>
    </source>
</evidence>
<evidence type="ECO:0000255" key="3"/>
<evidence type="ECO:0000255" key="4">
    <source>
        <dbReference type="PROSITE-ProRule" id="PRU00716"/>
    </source>
</evidence>
<evidence type="ECO:0000269" key="5">
    <source>
    </source>
</evidence>
<evidence type="ECO:0000269" key="6">
    <source>
    </source>
</evidence>
<evidence type="ECO:0000269" key="7">
    <source>
    </source>
</evidence>
<evidence type="ECO:0000269" key="8">
    <source>
    </source>
</evidence>
<evidence type="ECO:0000269" key="9">
    <source>
    </source>
</evidence>
<evidence type="ECO:0000269" key="10">
    <source>
    </source>
</evidence>
<evidence type="ECO:0000269" key="11">
    <source>
    </source>
</evidence>
<evidence type="ECO:0000269" key="12">
    <source>
    </source>
</evidence>
<evidence type="ECO:0000269" key="13">
    <source>
    </source>
</evidence>
<evidence type="ECO:0000269" key="14">
    <source>
    </source>
</evidence>
<evidence type="ECO:0000269" key="15">
    <source>
    </source>
</evidence>
<evidence type="ECO:0000269" key="16">
    <source>
    </source>
</evidence>
<evidence type="ECO:0000269" key="17">
    <source>
    </source>
</evidence>
<evidence type="ECO:0000269" key="18">
    <source>
    </source>
</evidence>
<evidence type="ECO:0000269" key="19">
    <source>
    </source>
</evidence>
<evidence type="ECO:0000269" key="20">
    <source>
    </source>
</evidence>
<evidence type="ECO:0000269" key="21">
    <source>
    </source>
</evidence>
<evidence type="ECO:0000269" key="22">
    <source>
    </source>
</evidence>
<evidence type="ECO:0000269" key="23">
    <source>
    </source>
</evidence>
<evidence type="ECO:0000269" key="24">
    <source>
    </source>
</evidence>
<evidence type="ECO:0000269" key="25">
    <source>
    </source>
</evidence>
<evidence type="ECO:0000269" key="26">
    <source>
    </source>
</evidence>
<evidence type="ECO:0000303" key="27">
    <source>
    </source>
</evidence>
<evidence type="ECO:0000303" key="28">
    <source>
    </source>
</evidence>
<evidence type="ECO:0000303" key="29">
    <source>
    </source>
</evidence>
<evidence type="ECO:0000303" key="30">
    <source>
    </source>
</evidence>
<evidence type="ECO:0000305" key="31"/>
<dbReference type="EC" id="1.6.3.1" evidence="9 12 16 21 23"/>
<dbReference type="EMBL" id="AF261943">
    <property type="protein sequence ID" value="AAF87572.1"/>
    <property type="molecule type" value="mRNA"/>
</dbReference>
<dbReference type="EMBL" id="AF254621">
    <property type="protein sequence ID" value="AAF68973.1"/>
    <property type="molecule type" value="mRNA"/>
</dbReference>
<dbReference type="EMBL" id="AB041035">
    <property type="protein sequence ID" value="BAA95695.1"/>
    <property type="molecule type" value="mRNA"/>
</dbReference>
<dbReference type="EMBL" id="AY288918">
    <property type="protein sequence ID" value="AAP41109.1"/>
    <property type="molecule type" value="mRNA"/>
</dbReference>
<dbReference type="EMBL" id="AJ704725">
    <property type="protein sequence ID" value="CAG28807.1"/>
    <property type="molecule type" value="mRNA"/>
</dbReference>
<dbReference type="EMBL" id="AJ704726">
    <property type="protein sequence ID" value="CAG28808.1"/>
    <property type="molecule type" value="mRNA"/>
</dbReference>
<dbReference type="EMBL" id="AJ704727">
    <property type="protein sequence ID" value="CAG28809.1"/>
    <property type="molecule type" value="mRNA"/>
</dbReference>
<dbReference type="EMBL" id="AJ704728">
    <property type="protein sequence ID" value="CAG28810.1"/>
    <property type="molecule type" value="mRNA"/>
</dbReference>
<dbReference type="EMBL" id="AJ704729">
    <property type="protein sequence ID" value="CAG28811.1"/>
    <property type="molecule type" value="mRNA"/>
</dbReference>
<dbReference type="EMBL" id="AK291830">
    <property type="protein sequence ID" value="BAF84519.1"/>
    <property type="molecule type" value="mRNA"/>
</dbReference>
<dbReference type="EMBL" id="AK298323">
    <property type="protein sequence ID" value="BAH12756.1"/>
    <property type="molecule type" value="mRNA"/>
</dbReference>
<dbReference type="EMBL" id="AP003400">
    <property type="status" value="NOT_ANNOTATED_CDS"/>
    <property type="molecule type" value="Genomic_DNA"/>
</dbReference>
<dbReference type="EMBL" id="AP001815">
    <property type="status" value="NOT_ANNOTATED_CDS"/>
    <property type="molecule type" value="Genomic_DNA"/>
</dbReference>
<dbReference type="EMBL" id="AP002404">
    <property type="status" value="NOT_ANNOTATED_CDS"/>
    <property type="molecule type" value="Genomic_DNA"/>
</dbReference>
<dbReference type="EMBL" id="BC040105">
    <property type="protein sequence ID" value="AAH40105.1"/>
    <property type="molecule type" value="mRNA"/>
</dbReference>
<dbReference type="EMBL" id="BC051371">
    <property type="protein sequence ID" value="AAH51371.1"/>
    <property type="molecule type" value="mRNA"/>
</dbReference>
<dbReference type="CCDS" id="CCDS44695.1">
    <molecule id="Q9NPH5-6"/>
</dbReference>
<dbReference type="CCDS" id="CCDS44696.1">
    <molecule id="Q9NPH5-8"/>
</dbReference>
<dbReference type="CCDS" id="CCDS73361.1">
    <molecule id="Q9NPH5-9"/>
</dbReference>
<dbReference type="CCDS" id="CCDS8285.1">
    <molecule id="Q9NPH5-1"/>
</dbReference>
<dbReference type="RefSeq" id="NP_001137308.2">
    <molecule id="Q9NPH5-6"/>
    <property type="nucleotide sequence ID" value="NM_001143836.3"/>
</dbReference>
<dbReference type="RefSeq" id="NP_001137309.2">
    <molecule id="Q9NPH5-8"/>
    <property type="nucleotide sequence ID" value="NM_001143837.2"/>
</dbReference>
<dbReference type="RefSeq" id="NP_001278855.2">
    <molecule id="Q9NPH5-2"/>
    <property type="nucleotide sequence ID" value="NM_001291926.2"/>
</dbReference>
<dbReference type="RefSeq" id="NP_001278856.1">
    <property type="nucleotide sequence ID" value="NM_001291927.1"/>
</dbReference>
<dbReference type="RefSeq" id="NP_001287924.1">
    <molecule id="Q9NPH5-9"/>
    <property type="nucleotide sequence ID" value="NM_001300995.1"/>
</dbReference>
<dbReference type="RefSeq" id="NP_058627.2">
    <molecule id="Q9NPH5-1"/>
    <property type="nucleotide sequence ID" value="NM_016931.5"/>
</dbReference>
<dbReference type="RefSeq" id="XP_011541159.1">
    <property type="nucleotide sequence ID" value="XM_011542857.2"/>
</dbReference>
<dbReference type="SMR" id="Q9NPH5"/>
<dbReference type="BioGRID" id="119078">
    <property type="interactions" value="23"/>
</dbReference>
<dbReference type="FunCoup" id="Q9NPH5">
    <property type="interactions" value="226"/>
</dbReference>
<dbReference type="IntAct" id="Q9NPH5">
    <property type="interactions" value="8"/>
</dbReference>
<dbReference type="STRING" id="9606.ENSP00000263317"/>
<dbReference type="BindingDB" id="Q9NPH5"/>
<dbReference type="ChEMBL" id="CHEMBL1250375"/>
<dbReference type="DrugBank" id="DB16869">
    <property type="generic name" value="Setanaxib"/>
</dbReference>
<dbReference type="DrugCentral" id="Q9NPH5"/>
<dbReference type="GuidetoPHARMACOLOGY" id="3004"/>
<dbReference type="PeroxiBase" id="5967">
    <property type="entry name" value="HsNOx04"/>
</dbReference>
<dbReference type="TCDB" id="5.B.1.1.2">
    <property type="family name" value="the phagocyte (gp91(phox)) nadph oxidase family"/>
</dbReference>
<dbReference type="GlyCosmos" id="Q9NPH5">
    <property type="glycosylation" value="2 sites, No reported glycans"/>
</dbReference>
<dbReference type="GlyGen" id="Q9NPH5">
    <property type="glycosylation" value="2 sites"/>
</dbReference>
<dbReference type="iPTMnet" id="Q9NPH5"/>
<dbReference type="PhosphoSitePlus" id="Q9NPH5"/>
<dbReference type="BioMuta" id="NOX4"/>
<dbReference type="DMDM" id="212276447"/>
<dbReference type="MassIVE" id="Q9NPH5"/>
<dbReference type="PaxDb" id="9606-ENSP00000263317"/>
<dbReference type="PeptideAtlas" id="Q9NPH5"/>
<dbReference type="ProteomicsDB" id="16922"/>
<dbReference type="ProteomicsDB" id="82003">
    <molecule id="Q9NPH5-1"/>
</dbReference>
<dbReference type="ProteomicsDB" id="82004">
    <molecule id="Q9NPH5-2"/>
</dbReference>
<dbReference type="ProteomicsDB" id="82005">
    <molecule id="Q9NPH5-3"/>
</dbReference>
<dbReference type="ProteomicsDB" id="82006">
    <molecule id="Q9NPH5-4"/>
</dbReference>
<dbReference type="ProteomicsDB" id="82008">
    <molecule id="Q9NPH5-6"/>
</dbReference>
<dbReference type="Antibodypedia" id="17747">
    <property type="antibodies" value="618 antibodies from 38 providers"/>
</dbReference>
<dbReference type="DNASU" id="50507"/>
<dbReference type="Ensembl" id="ENST00000263317.9">
    <molecule id="Q9NPH5-1"/>
    <property type="protein sequence ID" value="ENSP00000263317.4"/>
    <property type="gene ID" value="ENSG00000086991.13"/>
</dbReference>
<dbReference type="Ensembl" id="ENST00000343727.9">
    <molecule id="Q9NPH5-8"/>
    <property type="protein sequence ID" value="ENSP00000344747.5"/>
    <property type="gene ID" value="ENSG00000086991.13"/>
</dbReference>
<dbReference type="Ensembl" id="ENST00000375979.7">
    <molecule id="Q9NPH5-4"/>
    <property type="protein sequence ID" value="ENSP00000365146.3"/>
    <property type="gene ID" value="ENSG00000086991.13"/>
</dbReference>
<dbReference type="Ensembl" id="ENST00000393282.2">
    <molecule id="Q9NPH5-7"/>
    <property type="protein sequence ID" value="ENSP00000376961.2"/>
    <property type="gene ID" value="ENSG00000086991.13"/>
</dbReference>
<dbReference type="Ensembl" id="ENST00000424319.5">
    <molecule id="Q9NPH5-8"/>
    <property type="protein sequence ID" value="ENSP00000412446.1"/>
    <property type="gene ID" value="ENSG00000086991.13"/>
</dbReference>
<dbReference type="Ensembl" id="ENST00000527956.5">
    <molecule id="Q9NPH5-8"/>
    <property type="protein sequence ID" value="ENSP00000433797.1"/>
    <property type="gene ID" value="ENSG00000086991.13"/>
</dbReference>
<dbReference type="Ensembl" id="ENST00000529343.5">
    <molecule id="Q9NPH5-5"/>
    <property type="protein sequence ID" value="ENSP00000435474.1"/>
    <property type="gene ID" value="ENSG00000086991.13"/>
</dbReference>
<dbReference type="Ensembl" id="ENST00000531342.5">
    <molecule id="Q9NPH5-3"/>
    <property type="protein sequence ID" value="ENSP00000435039.1"/>
    <property type="gene ID" value="ENSG00000086991.13"/>
</dbReference>
<dbReference type="Ensembl" id="ENST00000532825.5">
    <molecule id="Q9NPH5-9"/>
    <property type="protein sequence ID" value="ENSP00000434924.1"/>
    <property type="gene ID" value="ENSG00000086991.13"/>
</dbReference>
<dbReference type="Ensembl" id="ENST00000534731.5">
    <molecule id="Q9NPH5-6"/>
    <property type="protein sequence ID" value="ENSP00000436892.1"/>
    <property type="gene ID" value="ENSG00000086991.13"/>
</dbReference>
<dbReference type="GeneID" id="50507"/>
<dbReference type="KEGG" id="hsa:50507"/>
<dbReference type="MANE-Select" id="ENST00000263317.9">
    <property type="protein sequence ID" value="ENSP00000263317.4"/>
    <property type="RefSeq nucleotide sequence ID" value="NM_016931.5"/>
    <property type="RefSeq protein sequence ID" value="NP_058627.2"/>
</dbReference>
<dbReference type="UCSC" id="uc001pct.4">
    <molecule id="Q9NPH5-1"/>
    <property type="organism name" value="human"/>
</dbReference>
<dbReference type="AGR" id="HGNC:7891"/>
<dbReference type="CTD" id="50507"/>
<dbReference type="DisGeNET" id="50507"/>
<dbReference type="GeneCards" id="NOX4"/>
<dbReference type="HGNC" id="HGNC:7891">
    <property type="gene designation" value="NOX4"/>
</dbReference>
<dbReference type="HPA" id="ENSG00000086991">
    <property type="expression patterns" value="Tissue enriched (kidney)"/>
</dbReference>
<dbReference type="MIM" id="605261">
    <property type="type" value="gene"/>
</dbReference>
<dbReference type="neXtProt" id="NX_Q9NPH5"/>
<dbReference type="OpenTargets" id="ENSG00000086991"/>
<dbReference type="PharmGKB" id="PA31692"/>
<dbReference type="VEuPathDB" id="HostDB:ENSG00000086991"/>
<dbReference type="eggNOG" id="KOG0039">
    <property type="taxonomic scope" value="Eukaryota"/>
</dbReference>
<dbReference type="GeneTree" id="ENSGT00940000159621"/>
<dbReference type="HOGENOM" id="CLU_005646_3_1_1"/>
<dbReference type="InParanoid" id="Q9NPH5"/>
<dbReference type="OMA" id="AFWYTHQ"/>
<dbReference type="OrthoDB" id="167398at2759"/>
<dbReference type="PAN-GO" id="Q9NPH5">
    <property type="GO annotations" value="5 GO annotations based on evolutionary models"/>
</dbReference>
<dbReference type="PhylomeDB" id="Q9NPH5"/>
<dbReference type="TreeFam" id="TF105354"/>
<dbReference type="PathwayCommons" id="Q9NPH5"/>
<dbReference type="Reactome" id="R-HSA-3299685">
    <property type="pathway name" value="Detoxification of Reactive Oxygen Species"/>
</dbReference>
<dbReference type="Reactome" id="R-HSA-9702518">
    <property type="pathway name" value="STAT5 activation downstream of FLT3 ITD mutants"/>
</dbReference>
<dbReference type="Reactome" id="R-HSA-9703465">
    <property type="pathway name" value="Signaling by FLT3 fusion proteins"/>
</dbReference>
<dbReference type="SignaLink" id="Q9NPH5"/>
<dbReference type="SIGNOR" id="Q9NPH5"/>
<dbReference type="BioGRID-ORCS" id="50507">
    <property type="hits" value="12 hits in 1156 CRISPR screens"/>
</dbReference>
<dbReference type="CD-CODE" id="91857CE7">
    <property type="entry name" value="Nucleolus"/>
</dbReference>
<dbReference type="ChiTaRS" id="NOX4">
    <property type="organism name" value="human"/>
</dbReference>
<dbReference type="GeneWiki" id="NOX4"/>
<dbReference type="GenomeRNAi" id="50507"/>
<dbReference type="Pharos" id="Q9NPH5">
    <property type="development level" value="Tchem"/>
</dbReference>
<dbReference type="PRO" id="PR:Q9NPH5"/>
<dbReference type="Proteomes" id="UP000005640">
    <property type="component" value="Chromosome 11"/>
</dbReference>
<dbReference type="RNAct" id="Q9NPH5">
    <property type="molecule type" value="protein"/>
</dbReference>
<dbReference type="Bgee" id="ENSG00000086991">
    <property type="expression patterns" value="Expressed in calcaneal tendon and 119 other cell types or tissues"/>
</dbReference>
<dbReference type="ExpressionAtlas" id="Q9NPH5">
    <property type="expression patterns" value="baseline and differential"/>
</dbReference>
<dbReference type="GO" id="GO:0005783">
    <property type="term" value="C:endoplasmic reticulum"/>
    <property type="evidence" value="ECO:0000314"/>
    <property type="project" value="UniProtKB"/>
</dbReference>
<dbReference type="GO" id="GO:0005789">
    <property type="term" value="C:endoplasmic reticulum membrane"/>
    <property type="evidence" value="ECO:0000314"/>
    <property type="project" value="UniProtKB"/>
</dbReference>
<dbReference type="GO" id="GO:0005925">
    <property type="term" value="C:focal adhesion"/>
    <property type="evidence" value="ECO:0007669"/>
    <property type="project" value="UniProtKB-SubCell"/>
</dbReference>
<dbReference type="GO" id="GO:0016020">
    <property type="term" value="C:membrane"/>
    <property type="evidence" value="ECO:0000304"/>
    <property type="project" value="UniProtKB"/>
</dbReference>
<dbReference type="GO" id="GO:0005739">
    <property type="term" value="C:mitochondrion"/>
    <property type="evidence" value="ECO:0000250"/>
    <property type="project" value="ARUK-UCL"/>
</dbReference>
<dbReference type="GO" id="GO:0043020">
    <property type="term" value="C:NADPH oxidase complex"/>
    <property type="evidence" value="ECO:0000318"/>
    <property type="project" value="GO_Central"/>
</dbReference>
<dbReference type="GO" id="GO:0005730">
    <property type="term" value="C:nucleolus"/>
    <property type="evidence" value="ECO:0000314"/>
    <property type="project" value="UniProtKB"/>
</dbReference>
<dbReference type="GO" id="GO:0005634">
    <property type="term" value="C:nucleus"/>
    <property type="evidence" value="ECO:0000314"/>
    <property type="project" value="UniProtKB"/>
</dbReference>
<dbReference type="GO" id="GO:0097038">
    <property type="term" value="C:perinuclear endoplasmic reticulum"/>
    <property type="evidence" value="ECO:0000250"/>
    <property type="project" value="ARUK-UCL"/>
</dbReference>
<dbReference type="GO" id="GO:0048471">
    <property type="term" value="C:perinuclear region of cytoplasm"/>
    <property type="evidence" value="ECO:0000314"/>
    <property type="project" value="UniProtKB"/>
</dbReference>
<dbReference type="GO" id="GO:0005886">
    <property type="term" value="C:plasma membrane"/>
    <property type="evidence" value="ECO:0000314"/>
    <property type="project" value="UniProtKB"/>
</dbReference>
<dbReference type="GO" id="GO:0009055">
    <property type="term" value="F:electron transfer activity"/>
    <property type="evidence" value="ECO:0000304"/>
    <property type="project" value="UniProtKB"/>
</dbReference>
<dbReference type="GO" id="GO:0050660">
    <property type="term" value="F:flavin adenine dinucleotide binding"/>
    <property type="evidence" value="ECO:0000304"/>
    <property type="project" value="UniProtKB"/>
</dbReference>
<dbReference type="GO" id="GO:0020037">
    <property type="term" value="F:heme binding"/>
    <property type="evidence" value="ECO:0000314"/>
    <property type="project" value="UniProtKB"/>
</dbReference>
<dbReference type="GO" id="GO:0072341">
    <property type="term" value="F:modified amino acid binding"/>
    <property type="evidence" value="ECO:0000314"/>
    <property type="project" value="UniProtKB"/>
</dbReference>
<dbReference type="GO" id="GO:0016174">
    <property type="term" value="F:NAD(P)H oxidase H2O2-forming activity"/>
    <property type="evidence" value="ECO:0000314"/>
    <property type="project" value="UniProtKB"/>
</dbReference>
<dbReference type="GO" id="GO:0106294">
    <property type="term" value="F:NADPH oxidase H202-forming activity"/>
    <property type="evidence" value="ECO:0007669"/>
    <property type="project" value="RHEA"/>
</dbReference>
<dbReference type="GO" id="GO:0000166">
    <property type="term" value="F:nucleotide binding"/>
    <property type="evidence" value="ECO:0000304"/>
    <property type="project" value="UniProtKB"/>
</dbReference>
<dbReference type="GO" id="GO:0019826">
    <property type="term" value="F:oxygen sensor activity"/>
    <property type="evidence" value="ECO:0000304"/>
    <property type="project" value="UniProtKB"/>
</dbReference>
<dbReference type="GO" id="GO:1990782">
    <property type="term" value="F:protein tyrosine kinase binding"/>
    <property type="evidence" value="ECO:0000250"/>
    <property type="project" value="ARUK-UCL"/>
</dbReference>
<dbReference type="GO" id="GO:0016175">
    <property type="term" value="F:superoxide-generating NAD(P)H oxidase activity"/>
    <property type="evidence" value="ECO:0000314"/>
    <property type="project" value="UniProtKB"/>
</dbReference>
<dbReference type="GO" id="GO:0106292">
    <property type="term" value="F:superoxide-generating NADPH oxidase activity"/>
    <property type="evidence" value="ECO:0007669"/>
    <property type="project" value="RHEA"/>
</dbReference>
<dbReference type="GO" id="GO:0045453">
    <property type="term" value="P:bone resorption"/>
    <property type="evidence" value="ECO:0007669"/>
    <property type="project" value="Ensembl"/>
</dbReference>
<dbReference type="GO" id="GO:0055007">
    <property type="term" value="P:cardiac muscle cell differentiation"/>
    <property type="evidence" value="ECO:0007669"/>
    <property type="project" value="Ensembl"/>
</dbReference>
<dbReference type="GO" id="GO:0000902">
    <property type="term" value="P:cell morphogenesis"/>
    <property type="evidence" value="ECO:0000250"/>
    <property type="project" value="UniProtKB"/>
</dbReference>
<dbReference type="GO" id="GO:0071333">
    <property type="term" value="P:cellular response to glucose stimulus"/>
    <property type="evidence" value="ECO:0007669"/>
    <property type="project" value="Ensembl"/>
</dbReference>
<dbReference type="GO" id="GO:0006952">
    <property type="term" value="P:defense response"/>
    <property type="evidence" value="ECO:0000318"/>
    <property type="project" value="GO_Central"/>
</dbReference>
<dbReference type="GO" id="GO:0010467">
    <property type="term" value="P:gene expression"/>
    <property type="evidence" value="ECO:0000315"/>
    <property type="project" value="CACAO"/>
</dbReference>
<dbReference type="GO" id="GO:0003015">
    <property type="term" value="P:heart process"/>
    <property type="evidence" value="ECO:0000316"/>
    <property type="project" value="ARUK-UCL"/>
</dbReference>
<dbReference type="GO" id="GO:0050667">
    <property type="term" value="P:homocysteine metabolic process"/>
    <property type="evidence" value="ECO:0000314"/>
    <property type="project" value="UniProtKB"/>
</dbReference>
<dbReference type="GO" id="GO:0006954">
    <property type="term" value="P:inflammatory response"/>
    <property type="evidence" value="ECO:0000304"/>
    <property type="project" value="UniProtKB"/>
</dbReference>
<dbReference type="GO" id="GO:0035556">
    <property type="term" value="P:intracellular signal transduction"/>
    <property type="evidence" value="ECO:0000250"/>
    <property type="project" value="ARUK-UCL"/>
</dbReference>
<dbReference type="GO" id="GO:0008285">
    <property type="term" value="P:negative regulation of cell population proliferation"/>
    <property type="evidence" value="ECO:0000250"/>
    <property type="project" value="UniProtKB"/>
</dbReference>
<dbReference type="GO" id="GO:2000573">
    <property type="term" value="P:positive regulation of DNA biosynthetic process"/>
    <property type="evidence" value="ECO:0007669"/>
    <property type="project" value="Ensembl"/>
</dbReference>
<dbReference type="GO" id="GO:0070374">
    <property type="term" value="P:positive regulation of ERK1 and ERK2 cascade"/>
    <property type="evidence" value="ECO:0007669"/>
    <property type="project" value="Ensembl"/>
</dbReference>
<dbReference type="GO" id="GO:0051897">
    <property type="term" value="P:positive regulation of phosphatidylinositol 3-kinase/protein kinase B signal transduction"/>
    <property type="evidence" value="ECO:0007669"/>
    <property type="project" value="Ensembl"/>
</dbReference>
<dbReference type="GO" id="GO:1903409">
    <property type="term" value="P:reactive oxygen species biosynthetic process"/>
    <property type="evidence" value="ECO:0000303"/>
    <property type="project" value="ARUK-UCL"/>
</dbReference>
<dbReference type="GO" id="GO:0042554">
    <property type="term" value="P:superoxide anion generation"/>
    <property type="evidence" value="ECO:0000250"/>
    <property type="project" value="UniProtKB"/>
</dbReference>
<dbReference type="GO" id="GO:0006801">
    <property type="term" value="P:superoxide metabolic process"/>
    <property type="evidence" value="ECO:0000314"/>
    <property type="project" value="CACAO"/>
</dbReference>
<dbReference type="CDD" id="cd06186">
    <property type="entry name" value="NOX_Duox_like_FAD_NADP"/>
    <property type="match status" value="1"/>
</dbReference>
<dbReference type="FunFam" id="2.40.30.10:FF:000183">
    <property type="entry name" value="NADPH oxidase 4"/>
    <property type="match status" value="1"/>
</dbReference>
<dbReference type="FunFam" id="3.40.50.80:FF:000015">
    <property type="entry name" value="NADPH oxidase 4"/>
    <property type="match status" value="1"/>
</dbReference>
<dbReference type="Gene3D" id="3.40.50.80">
    <property type="entry name" value="Nucleotide-binding domain of ferredoxin-NADP reductase (FNR) module"/>
    <property type="match status" value="1"/>
</dbReference>
<dbReference type="Gene3D" id="2.40.30.10">
    <property type="entry name" value="Translation factors"/>
    <property type="match status" value="1"/>
</dbReference>
<dbReference type="InterPro" id="IPR000778">
    <property type="entry name" value="Cyt_b245_heavy_chain"/>
</dbReference>
<dbReference type="InterPro" id="IPR013112">
    <property type="entry name" value="FAD-bd_8"/>
</dbReference>
<dbReference type="InterPro" id="IPR017927">
    <property type="entry name" value="FAD-bd_FR_type"/>
</dbReference>
<dbReference type="InterPro" id="IPR013130">
    <property type="entry name" value="Fe3_Rdtase_TM_dom"/>
</dbReference>
<dbReference type="InterPro" id="IPR013121">
    <property type="entry name" value="Fe_red_NAD-bd_6"/>
</dbReference>
<dbReference type="InterPro" id="IPR039261">
    <property type="entry name" value="FNR_nucleotide-bd"/>
</dbReference>
<dbReference type="InterPro" id="IPR050369">
    <property type="entry name" value="RBOH/FRE"/>
</dbReference>
<dbReference type="InterPro" id="IPR017938">
    <property type="entry name" value="Riboflavin_synthase-like_b-brl"/>
</dbReference>
<dbReference type="PANTHER" id="PTHR11972">
    <property type="entry name" value="NADPH OXIDASE"/>
    <property type="match status" value="1"/>
</dbReference>
<dbReference type="PANTHER" id="PTHR11972:SF206">
    <property type="entry name" value="NADPH OXIDASE 4"/>
    <property type="match status" value="1"/>
</dbReference>
<dbReference type="Pfam" id="PF08022">
    <property type="entry name" value="FAD_binding_8"/>
    <property type="match status" value="1"/>
</dbReference>
<dbReference type="Pfam" id="PF01794">
    <property type="entry name" value="Ferric_reduct"/>
    <property type="match status" value="1"/>
</dbReference>
<dbReference type="Pfam" id="PF08030">
    <property type="entry name" value="NAD_binding_6"/>
    <property type="match status" value="1"/>
</dbReference>
<dbReference type="PRINTS" id="PR00466">
    <property type="entry name" value="GP91PHOX"/>
</dbReference>
<dbReference type="SUPFAM" id="SSF52343">
    <property type="entry name" value="Ferredoxin reductase-like, C-terminal NADP-linked domain"/>
    <property type="match status" value="1"/>
</dbReference>
<dbReference type="SUPFAM" id="SSF63380">
    <property type="entry name" value="Riboflavin synthase domain-like"/>
    <property type="match status" value="1"/>
</dbReference>
<dbReference type="PROSITE" id="PS51384">
    <property type="entry name" value="FAD_FR"/>
    <property type="match status" value="1"/>
</dbReference>
<accession>Q9NPH5</accession>
<accession>A8K715</accession>
<accession>B7Z520</accession>
<accession>E7EMD7</accession>
<accession>Q5K3R4</accession>
<accession>Q5K3R5</accession>
<accession>Q5K3R6</accession>
<accession>Q5K3R8</accession>
<accession>Q7Z7G3</accession>
<accession>Q86V92</accession>
<feature type="chain" id="PRO_0000238980" description="NADPH oxidase 4">
    <location>
        <begin position="1"/>
        <end position="578"/>
    </location>
</feature>
<feature type="topological domain" description="Cytoplasmic" evidence="3">
    <location>
        <begin position="1"/>
        <end position="16"/>
    </location>
</feature>
<feature type="transmembrane region" description="Helical" evidence="3">
    <location>
        <begin position="17"/>
        <end position="37"/>
    </location>
</feature>
<feature type="topological domain" description="Extracellular" evidence="3">
    <location>
        <begin position="38"/>
        <end position="62"/>
    </location>
</feature>
<feature type="transmembrane region" description="Helical" evidence="3">
    <location>
        <begin position="63"/>
        <end position="83"/>
    </location>
</feature>
<feature type="topological domain" description="Cytoplasmic" evidence="3">
    <location>
        <begin position="84"/>
        <end position="103"/>
    </location>
</feature>
<feature type="transmembrane region" description="Helical" evidence="3">
    <location>
        <begin position="104"/>
        <end position="124"/>
    </location>
</feature>
<feature type="topological domain" description="Extracellular" evidence="3">
    <location>
        <begin position="125"/>
        <end position="154"/>
    </location>
</feature>
<feature type="transmembrane region" description="Helical" evidence="3">
    <location>
        <begin position="155"/>
        <end position="175"/>
    </location>
</feature>
<feature type="topological domain" description="Cytoplasmic" evidence="3">
    <location>
        <begin position="176"/>
        <end position="188"/>
    </location>
</feature>
<feature type="transmembrane region" description="Helical" evidence="3">
    <location>
        <begin position="189"/>
        <end position="209"/>
    </location>
</feature>
<feature type="topological domain" description="Extracellular" evidence="3">
    <location>
        <begin position="210"/>
        <end position="424"/>
    </location>
</feature>
<feature type="transmembrane region" description="Helical" evidence="3">
    <location>
        <begin position="425"/>
        <end position="445"/>
    </location>
</feature>
<feature type="topological domain" description="Cytoplasmic" evidence="3">
    <location>
        <begin position="446"/>
        <end position="578"/>
    </location>
</feature>
<feature type="domain" description="Ferric oxidoreductase">
    <location>
        <begin position="58"/>
        <end position="303"/>
    </location>
</feature>
<feature type="domain" description="FAD-binding FR-type" evidence="4">
    <location>
        <begin position="304"/>
        <end position="419"/>
    </location>
</feature>
<feature type="region of interest" description="E-loop; essential for H2O2 generating catalytic activity" evidence="21">
    <location>
        <begin position="218"/>
        <end position="273"/>
    </location>
</feature>
<feature type="region of interest" description="Mediates interaction with TLR4" evidence="12">
    <location>
        <begin position="248"/>
        <end position="575"/>
    </location>
</feature>
<feature type="glycosylation site" description="N-linked (GlcNAc...) asparagine" evidence="3">
    <location>
        <position position="133"/>
    </location>
</feature>
<feature type="glycosylation site" description="N-linked (GlcNAc...) asparagine" evidence="3">
    <location>
        <position position="230"/>
    </location>
</feature>
<feature type="splice variant" id="VSP_019052" description="In isoform 2." evidence="30">
    <location>
        <begin position="1"/>
        <end position="74"/>
    </location>
</feature>
<feature type="splice variant" id="VSP_053826" description="In isoform 8 and isoform 9." evidence="27">
    <location>
        <begin position="1"/>
        <end position="24"/>
    </location>
</feature>
<feature type="splice variant" id="VSP_019053" description="In isoform 3 and isoform 4." evidence="30">
    <location>
        <begin position="52"/>
        <end position="358"/>
    </location>
</feature>
<feature type="splice variant" id="VSP_019054" description="In isoform 7." evidence="29">
    <original>LGL</original>
    <variation>ELS</variation>
    <location>
        <begin position="52"/>
        <end position="54"/>
    </location>
</feature>
<feature type="splice variant" id="VSP_019055" description="In isoform 7." evidence="29">
    <location>
        <begin position="55"/>
        <end position="578"/>
    </location>
</feature>
<feature type="splice variant" id="VSP_019056" description="In isoform 5." evidence="30">
    <original>GLLKYQTNLDTHPP</original>
    <variation>VQLKPKQHLGFILK</variation>
    <location>
        <begin position="211"/>
        <end position="224"/>
    </location>
</feature>
<feature type="splice variant" id="VSP_019057" description="In isoform 5." evidence="30">
    <location>
        <begin position="225"/>
        <end position="578"/>
    </location>
</feature>
<feature type="splice variant" id="VSP_019058" description="In isoform 3, isoform 6 and isoform 9." evidence="27 28 30">
    <location>
        <begin position="407"/>
        <end position="446"/>
    </location>
</feature>
<feature type="sequence variant" id="VAR_047114" description="In dbSNP:rs317139." evidence="5 6 7 8 11 13 15">
    <original>M</original>
    <variation>I</variation>
    <location>
        <position position="315"/>
    </location>
</feature>
<feature type="mutagenesis site" description="50% reduction in H2O2 generation, without any effect on superoxide generation." evidence="21">
    <original>H</original>
    <variation>Q</variation>
    <location>
        <position position="16"/>
    </location>
</feature>
<feature type="mutagenesis site" description="No effect on H2O2 or superoxide generation." evidence="21">
    <original>H</original>
    <variation>Q</variation>
    <location>
        <position position="47"/>
    </location>
</feature>
<feature type="mutagenesis site" description="Loss of H2O2 generation with predominant generation of superoxide. No effect on localization to the endoplasmic reticulum." evidence="21">
    <location>
        <begin position="218"/>
        <end position="235"/>
    </location>
</feature>
<feature type="mutagenesis site" description="Loss of H2O2 generation with predominant generation of superoxide." evidence="21 23">
    <original>H</original>
    <variation>Q</variation>
    <location>
        <position position="222"/>
    </location>
</feature>
<feature type="mutagenesis site" description="Loss of H2O2 generation with predominant generation of superoxide." evidence="21">
    <original>C</original>
    <variation>V</variation>
    <location>
        <position position="226"/>
    </location>
</feature>
<feature type="mutagenesis site" description="No effect on H2O2 or superoxide generation." evidence="21">
    <original>H</original>
    <variation>Q</variation>
    <location>
        <position position="246"/>
    </location>
</feature>
<feature type="mutagenesis site" description="No effect on H2O2 or superoxide generation." evidence="21">
    <original>H</original>
    <variation>Q</variation>
    <location>
        <position position="248"/>
    </location>
</feature>
<feature type="mutagenesis site" description="Loss of H2O2 generation with predominant generation of superoxide. No effect on localization to the endoplasmic reticulum." evidence="21">
    <location>
        <begin position="264"/>
        <end position="273"/>
    </location>
</feature>
<feature type="mutagenesis site" description="Loss of H2O2 generation with predominant generation of superoxide." evidence="21">
    <original>C</original>
    <variation>V</variation>
    <location>
        <position position="270"/>
    </location>
</feature>
<feature type="mutagenesis site" description="Partial loss of catalytic activity. No effect on CYBA localization." evidence="16">
    <original>R</original>
    <variation>RGT</variation>
    <location>
        <position position="304"/>
    </location>
</feature>
<feature type="mutagenesis site" description="Partial loss of catalytic activity. No effect on CYBA localization." evidence="16">
    <location>
        <begin position="575"/>
        <end position="578"/>
    </location>
</feature>
<feature type="sequence conflict" description="In Ref. 6; BAH12756." evidence="31" ref="6">
    <original>W</original>
    <variation>C</variation>
    <location>
        <position position="286"/>
    </location>
</feature>
<protein>
    <recommendedName>
        <fullName>NADPH oxidase 4</fullName>
        <ecNumber evidence="9 12 16 21 23">1.6.3.1</ecNumber>
    </recommendedName>
    <alternativeName>
        <fullName>Kidney oxidase-1</fullName>
        <shortName>KOX-1</shortName>
    </alternativeName>
    <alternativeName>
        <fullName>Kidney superoxide-producing NADPH oxidase</fullName>
    </alternativeName>
    <alternativeName>
        <fullName>Renal NAD(P)H-oxidase</fullName>
    </alternativeName>
</protein>
<comment type="function">
    <text evidence="5 6 9 10 12 14 16 17 18 19 20 21 23 26">NADPH oxidase that catalyzes predominantly the reduction of oxygen to H2O2 (PubMed:14966267, PubMed:15356101, PubMed:15927447, PubMed:21343298, PubMed:25062272). Can also catalyze to a smaller extent, the reduction of oxygen to superoxide (PubMed:10869423, PubMed:11032835, PubMed:15155719, PubMed:15572675, PubMed:15927447, PubMed:16019190, PubMed:16179589, PubMed:16230378, PubMed:16324151, PubMed:25062272). May function as an oxygen sensor regulating the KCNK3/TASK-1 potassium channel and HIF1A activity (PubMed:16019190). May regulate insulin signaling cascade (PubMed:14966267). May play a role in apoptosis, bone resorption and lipolysaccharide-mediated activation of NFKB (PubMed:15356101, PubMed:15572675). May produce superoxide in the nucleus and play a role in regulating gene expression upon cell stimulation (PubMed:16324151). Promotes ferroptosis, reactive oxygen species production and reduced glutathione (GSH) levels by activating NLRP3 inflammasome activation and cytokine release (PubMed:39909992).</text>
</comment>
<comment type="function">
    <molecule>Isoform 4</molecule>
    <text evidence="15 22">NADPH oxidase that catalyzes the generation of superoxide from molecular oxygen utilizing NADPH as an electron donor (PubMed:15721269, PubMed:23393389). Involved in redox signaling in vascular cells (PubMed:23393389). Modulates the nuclear activation of ERK1/2 and the ELK1 transcription factor, and is capable of inducing nuclear DNA damage (PubMed:23393389).</text>
</comment>
<comment type="function">
    <molecule>Isoform 3</molecule>
    <text evidence="15">Lacks superoxide-generating NADPH oxidase activity.</text>
</comment>
<comment type="catalytic activity">
    <reaction evidence="5 6 10 14 16 17 18 19 20 23">
        <text>NADPH + 2 O2 = 2 superoxide + NADP(+) + H(+)</text>
        <dbReference type="Rhea" id="RHEA:63180"/>
        <dbReference type="ChEBI" id="CHEBI:15378"/>
        <dbReference type="ChEBI" id="CHEBI:15379"/>
        <dbReference type="ChEBI" id="CHEBI:18421"/>
        <dbReference type="ChEBI" id="CHEBI:57783"/>
        <dbReference type="ChEBI" id="CHEBI:58349"/>
    </reaction>
</comment>
<comment type="catalytic activity">
    <molecule>Isoform 4</molecule>
    <reaction evidence="15 22">
        <text>NADPH + 2 O2 = 2 superoxide + NADP(+) + H(+)</text>
        <dbReference type="Rhea" id="RHEA:63180"/>
        <dbReference type="ChEBI" id="CHEBI:15378"/>
        <dbReference type="ChEBI" id="CHEBI:15379"/>
        <dbReference type="ChEBI" id="CHEBI:18421"/>
        <dbReference type="ChEBI" id="CHEBI:57783"/>
        <dbReference type="ChEBI" id="CHEBI:58349"/>
    </reaction>
</comment>
<comment type="catalytic activity">
    <reaction evidence="9 12 16 21 23">
        <text>NADPH + O2 + H(+) = H2O2 + NADP(+)</text>
        <dbReference type="Rhea" id="RHEA:11260"/>
        <dbReference type="ChEBI" id="CHEBI:15378"/>
        <dbReference type="ChEBI" id="CHEBI:15379"/>
        <dbReference type="ChEBI" id="CHEBI:16240"/>
        <dbReference type="ChEBI" id="CHEBI:57783"/>
        <dbReference type="ChEBI" id="CHEBI:58349"/>
        <dbReference type="EC" id="1.6.3.1"/>
    </reaction>
</comment>
<comment type="cofactor">
    <cofactor evidence="23">
        <name>heme</name>
        <dbReference type="ChEBI" id="CHEBI:30413"/>
    </cofactor>
</comment>
<comment type="activity regulation">
    <text evidence="2 9 14 17 20">Inhibited by plumbagin (By similarity). Activated by phorbol 12-myristate 13-acetate (PMA). Activated by insulin. Inhibited by diphenylene iodonium.</text>
</comment>
<comment type="subunit">
    <text evidence="1 12 16 26">Interacts with protein disulfide isomerase (By similarity). Interacts with, relocalizes and stabilizes CYBA/p22phox. Interacts with TLR4. Interacts with PPP1R15A (PubMed:26742780). Interacts with LRRC8A; this interaction prevents the ubiquitin-mediated degradation of LRRC8A (PubMed:39909992).</text>
</comment>
<comment type="interaction">
    <interactant intactId="EBI-11301574">
        <id>Q9NPH5</id>
    </interactant>
    <interactant intactId="EBI-528701">
        <id>O00206</id>
        <label>TLR4</label>
    </interactant>
    <organismsDiffer>false</organismsDiffer>
    <experiments>4</experiments>
</comment>
<comment type="subcellular location">
    <subcellularLocation>
        <location evidence="26">Cytoplasm</location>
    </subcellularLocation>
    <subcellularLocation>
        <location evidence="14 16 21 24">Endoplasmic reticulum membrane</location>
        <topology evidence="3">Multi-pass membrane protein</topology>
    </subcellularLocation>
    <subcellularLocation>
        <location evidence="17 21">Cell membrane</location>
        <topology evidence="3">Multi-pass membrane protein</topology>
    </subcellularLocation>
    <subcellularLocation>
        <location evidence="1">Cell junction</location>
        <location evidence="1">Focal adhesion</location>
    </subcellularLocation>
    <subcellularLocation>
        <location evidence="20">Nucleus</location>
    </subcellularLocation>
</comment>
<comment type="subcellular location">
    <molecule>Isoform 4</molecule>
    <subcellularLocation>
        <location evidence="22">Nucleus</location>
    </subcellularLocation>
    <subcellularLocation>
        <location evidence="22">Nucleus</location>
        <location evidence="22">Nucleolus</location>
    </subcellularLocation>
    <subcellularLocation>
        <location evidence="15">Cytoplasm</location>
    </subcellularLocation>
    <subcellularLocation>
        <location evidence="15">Cytoplasm</location>
        <location evidence="15">Perinuclear region</location>
    </subcellularLocation>
</comment>
<comment type="subcellular location">
    <molecule>Isoform 3</molecule>
    <subcellularLocation>
        <location evidence="15">Cytoplasm</location>
    </subcellularLocation>
    <subcellularLocation>
        <location evidence="15">Cytoplasm</location>
        <location evidence="15">Perinuclear region</location>
    </subcellularLocation>
</comment>
<comment type="subcellular location">
    <molecule>Isoform 5</molecule>
    <subcellularLocation>
        <location evidence="15">Cytoplasm</location>
    </subcellularLocation>
    <subcellularLocation>
        <location evidence="15">Cytoplasm</location>
        <location evidence="15">Perinuclear region</location>
    </subcellularLocation>
</comment>
<comment type="subcellular location">
    <molecule>Isoform 6</molecule>
    <subcellularLocation>
        <location evidence="15">Cytoplasm</location>
    </subcellularLocation>
    <subcellularLocation>
        <location evidence="15">Cytoplasm</location>
        <location evidence="15">Perinuclear region</location>
    </subcellularLocation>
</comment>
<comment type="alternative products">
    <event type="alternative splicing"/>
    <isoform>
        <id>Q9NPH5-1</id>
        <name>1</name>
        <sequence type="displayed"/>
    </isoform>
    <isoform>
        <id>Q9NPH5-2</id>
        <name>2</name>
        <name>Nox4A</name>
        <sequence type="described" ref="VSP_019052"/>
    </isoform>
    <isoform>
        <id>Q9NPH5-3</id>
        <name>3</name>
        <name>Nox4E</name>
        <sequence type="described" ref="VSP_019053 VSP_019058"/>
    </isoform>
    <isoform>
        <id>Q9NPH5-4</id>
        <name>4</name>
        <name>28 kDa</name>
        <name>Nox4D</name>
        <sequence type="described" ref="VSP_019053"/>
    </isoform>
    <isoform>
        <id>Q9NPH5-5</id>
        <name>5</name>
        <name>Nox4C</name>
        <sequence type="described" ref="VSP_019056 VSP_019057"/>
    </isoform>
    <isoform>
        <id>Q9NPH5-6</id>
        <name>6</name>
        <name>Nox4B</name>
        <sequence type="described" ref="VSP_019058"/>
    </isoform>
    <isoform>
        <id>Q9NPH5-7</id>
        <name>7</name>
        <sequence type="described" ref="VSP_019054 VSP_019055"/>
    </isoform>
    <isoform>
        <id>Q9NPH5-8</id>
        <name>8</name>
        <sequence type="described" ref="VSP_053826"/>
    </isoform>
    <isoform>
        <id>Q9NPH5-9</id>
        <name>9</name>
        <sequence type="described" ref="VSP_053826 VSP_019058"/>
    </isoform>
</comment>
<comment type="tissue specificity">
    <text evidence="6 7 11 20">Expressed by distal tubular cells in kidney cortex and in endothelial cells (at protein level). Widely expressed. Strongly expressed in kidney and to a lower extent in heart, adipocytes, hepatoma, endothelial cells, skeletal muscle, brain, several brain tumor cell lines and airway epithelial cells.</text>
</comment>
<comment type="developmental stage">
    <text evidence="5 6 7">Expressed in fetal kidney and fetal liver.</text>
</comment>
<comment type="induction">
    <text evidence="14">By 7-ketocholesterol (at protein level).</text>
</comment>
<comment type="PTM">
    <text evidence="25">Deubiquitinated by USP19.</text>
</comment>
<comment type="PTM">
    <molecule>Isoform 4</molecule>
    <text evidence="15">N-glycosylated and glycosylation is required for its proper function.</text>
</comment>
<comment type="PTM">
    <molecule>Isoform 3</molecule>
    <text evidence="15">N-glycosylated.</text>
</comment>
<organism>
    <name type="scientific">Homo sapiens</name>
    <name type="common">Human</name>
    <dbReference type="NCBI Taxonomy" id="9606"/>
    <lineage>
        <taxon>Eukaryota</taxon>
        <taxon>Metazoa</taxon>
        <taxon>Chordata</taxon>
        <taxon>Craniata</taxon>
        <taxon>Vertebrata</taxon>
        <taxon>Euteleostomi</taxon>
        <taxon>Mammalia</taxon>
        <taxon>Eutheria</taxon>
        <taxon>Euarchontoglires</taxon>
        <taxon>Primates</taxon>
        <taxon>Haplorrhini</taxon>
        <taxon>Catarrhini</taxon>
        <taxon>Hominidae</taxon>
        <taxon>Homo</taxon>
    </lineage>
</organism>